<dbReference type="EMBL" id="CP000554">
    <property type="protein sequence ID" value="ABM79042.1"/>
    <property type="molecule type" value="Genomic_DNA"/>
</dbReference>
<dbReference type="RefSeq" id="WP_011131104.1">
    <property type="nucleotide sequence ID" value="NC_008820.1"/>
</dbReference>
<dbReference type="SMR" id="A2CC32"/>
<dbReference type="STRING" id="59922.P9303_23071"/>
<dbReference type="KEGG" id="pmf:P9303_23071"/>
<dbReference type="HOGENOM" id="CLU_083987_3_3_3"/>
<dbReference type="BioCyc" id="PMAR59922:G1G80-2024-MONOMER"/>
<dbReference type="Proteomes" id="UP000002274">
    <property type="component" value="Chromosome"/>
</dbReference>
<dbReference type="GO" id="GO:0022625">
    <property type="term" value="C:cytosolic large ribosomal subunit"/>
    <property type="evidence" value="ECO:0007669"/>
    <property type="project" value="TreeGrafter"/>
</dbReference>
<dbReference type="GO" id="GO:0019843">
    <property type="term" value="F:rRNA binding"/>
    <property type="evidence" value="ECO:0007669"/>
    <property type="project" value="UniProtKB-UniRule"/>
</dbReference>
<dbReference type="GO" id="GO:0003735">
    <property type="term" value="F:structural constituent of ribosome"/>
    <property type="evidence" value="ECO:0007669"/>
    <property type="project" value="InterPro"/>
</dbReference>
<dbReference type="GO" id="GO:0006412">
    <property type="term" value="P:translation"/>
    <property type="evidence" value="ECO:0007669"/>
    <property type="project" value="UniProtKB-UniRule"/>
</dbReference>
<dbReference type="CDD" id="cd00336">
    <property type="entry name" value="Ribosomal_L22"/>
    <property type="match status" value="1"/>
</dbReference>
<dbReference type="Gene3D" id="3.90.470.10">
    <property type="entry name" value="Ribosomal protein L22/L17"/>
    <property type="match status" value="1"/>
</dbReference>
<dbReference type="HAMAP" id="MF_01331_B">
    <property type="entry name" value="Ribosomal_uL22_B"/>
    <property type="match status" value="1"/>
</dbReference>
<dbReference type="InterPro" id="IPR001063">
    <property type="entry name" value="Ribosomal_uL22"/>
</dbReference>
<dbReference type="InterPro" id="IPR005727">
    <property type="entry name" value="Ribosomal_uL22_bac/chlpt-type"/>
</dbReference>
<dbReference type="InterPro" id="IPR047867">
    <property type="entry name" value="Ribosomal_uL22_bac/org-type"/>
</dbReference>
<dbReference type="InterPro" id="IPR018260">
    <property type="entry name" value="Ribosomal_uL22_CS"/>
</dbReference>
<dbReference type="InterPro" id="IPR036394">
    <property type="entry name" value="Ribosomal_uL22_sf"/>
</dbReference>
<dbReference type="NCBIfam" id="TIGR01044">
    <property type="entry name" value="rplV_bact"/>
    <property type="match status" value="1"/>
</dbReference>
<dbReference type="PANTHER" id="PTHR13501">
    <property type="entry name" value="CHLOROPLAST 50S RIBOSOMAL PROTEIN L22-RELATED"/>
    <property type="match status" value="1"/>
</dbReference>
<dbReference type="PANTHER" id="PTHR13501:SF8">
    <property type="entry name" value="LARGE RIBOSOMAL SUBUNIT PROTEIN UL22M"/>
    <property type="match status" value="1"/>
</dbReference>
<dbReference type="Pfam" id="PF00237">
    <property type="entry name" value="Ribosomal_L22"/>
    <property type="match status" value="1"/>
</dbReference>
<dbReference type="SUPFAM" id="SSF54843">
    <property type="entry name" value="Ribosomal protein L22"/>
    <property type="match status" value="1"/>
</dbReference>
<dbReference type="PROSITE" id="PS00464">
    <property type="entry name" value="RIBOSOMAL_L22"/>
    <property type="match status" value="1"/>
</dbReference>
<sequence length="122" mass="13315">MTTSSPTTTTIAKAHGRFIRGSVSKVRRVLDQIRGRTYRDALIMLEFMPYRSTGPITKVLRSAVANAEHNLGLDPASLVIAQASADMGPSMKRYRPRAQGRAFAIKKQTCHISIAVAAQTDS</sequence>
<keyword id="KW-0687">Ribonucleoprotein</keyword>
<keyword id="KW-0689">Ribosomal protein</keyword>
<keyword id="KW-0694">RNA-binding</keyword>
<keyword id="KW-0699">rRNA-binding</keyword>
<organism>
    <name type="scientific">Prochlorococcus marinus (strain MIT 9303)</name>
    <dbReference type="NCBI Taxonomy" id="59922"/>
    <lineage>
        <taxon>Bacteria</taxon>
        <taxon>Bacillati</taxon>
        <taxon>Cyanobacteriota</taxon>
        <taxon>Cyanophyceae</taxon>
        <taxon>Synechococcales</taxon>
        <taxon>Prochlorococcaceae</taxon>
        <taxon>Prochlorococcus</taxon>
    </lineage>
</organism>
<accession>A2CC32</accession>
<gene>
    <name evidence="1" type="primary">rplV</name>
    <name evidence="1" type="synonym">rpl22</name>
    <name type="ordered locus">P9303_23071</name>
</gene>
<comment type="function">
    <text evidence="1">This protein binds specifically to 23S rRNA; its binding is stimulated by other ribosomal proteins, e.g. L4, L17, and L20. It is important during the early stages of 50S assembly. It makes multiple contacts with different domains of the 23S rRNA in the assembled 50S subunit and ribosome (By similarity).</text>
</comment>
<comment type="function">
    <text evidence="1">The globular domain of the protein is located near the polypeptide exit tunnel on the outside of the subunit, while an extended beta-hairpin is found that lines the wall of the exit tunnel in the center of the 70S ribosome.</text>
</comment>
<comment type="subunit">
    <text evidence="1">Part of the 50S ribosomal subunit.</text>
</comment>
<comment type="similarity">
    <text evidence="1">Belongs to the universal ribosomal protein uL22 family.</text>
</comment>
<name>RL22_PROM3</name>
<feature type="chain" id="PRO_0000354508" description="Large ribosomal subunit protein uL22">
    <location>
        <begin position="1"/>
        <end position="122"/>
    </location>
</feature>
<proteinExistence type="inferred from homology"/>
<reference key="1">
    <citation type="journal article" date="2007" name="PLoS Genet.">
        <title>Patterns and implications of gene gain and loss in the evolution of Prochlorococcus.</title>
        <authorList>
            <person name="Kettler G.C."/>
            <person name="Martiny A.C."/>
            <person name="Huang K."/>
            <person name="Zucker J."/>
            <person name="Coleman M.L."/>
            <person name="Rodrigue S."/>
            <person name="Chen F."/>
            <person name="Lapidus A."/>
            <person name="Ferriera S."/>
            <person name="Johnson J."/>
            <person name="Steglich C."/>
            <person name="Church G.M."/>
            <person name="Richardson P."/>
            <person name="Chisholm S.W."/>
        </authorList>
    </citation>
    <scope>NUCLEOTIDE SEQUENCE [LARGE SCALE GENOMIC DNA]</scope>
    <source>
        <strain>MIT 9303</strain>
    </source>
</reference>
<evidence type="ECO:0000255" key="1">
    <source>
        <dbReference type="HAMAP-Rule" id="MF_01331"/>
    </source>
</evidence>
<evidence type="ECO:0000305" key="2"/>
<protein>
    <recommendedName>
        <fullName evidence="1">Large ribosomal subunit protein uL22</fullName>
    </recommendedName>
    <alternativeName>
        <fullName evidence="2">50S ribosomal protein L22</fullName>
    </alternativeName>
</protein>